<reference key="1">
    <citation type="journal article" date="2001" name="J. Bacteriol.">
        <title>Genome sequence and comparative analysis of the solvent-producing bacterium Clostridium acetobutylicum.</title>
        <authorList>
            <person name="Noelling J."/>
            <person name="Breton G."/>
            <person name="Omelchenko M.V."/>
            <person name="Makarova K.S."/>
            <person name="Zeng Q."/>
            <person name="Gibson R."/>
            <person name="Lee H.M."/>
            <person name="Dubois J."/>
            <person name="Qiu D."/>
            <person name="Hitti J."/>
            <person name="Wolf Y.I."/>
            <person name="Tatusov R.L."/>
            <person name="Sabathe F."/>
            <person name="Doucette-Stamm L.A."/>
            <person name="Soucaille P."/>
            <person name="Daly M.J."/>
            <person name="Bennett G.N."/>
            <person name="Koonin E.V."/>
            <person name="Smith D.R."/>
        </authorList>
    </citation>
    <scope>NUCLEOTIDE SEQUENCE [LARGE SCALE GENOMIC DNA]</scope>
    <source>
        <strain>ATCC 824 / DSM 792 / JCM 1419 / IAM 19013 / LMG 5710 / NBRC 13948 / NRRL B-527 / VKM B-1787 / 2291 / W</strain>
    </source>
</reference>
<accession>Q97ED6</accession>
<dbReference type="EC" id="6.1.1.16" evidence="1"/>
<dbReference type="EMBL" id="AE001437">
    <property type="protein sequence ID" value="AAK81114.1"/>
    <property type="molecule type" value="Genomic_DNA"/>
</dbReference>
<dbReference type="PIR" id="G97290">
    <property type="entry name" value="G97290"/>
</dbReference>
<dbReference type="RefSeq" id="NP_349774.1">
    <property type="nucleotide sequence ID" value="NC_003030.1"/>
</dbReference>
<dbReference type="RefSeq" id="WP_010966454.1">
    <property type="nucleotide sequence ID" value="NC_003030.1"/>
</dbReference>
<dbReference type="SMR" id="Q97ED6"/>
<dbReference type="STRING" id="272562.CA_C3177"/>
<dbReference type="GeneID" id="44999664"/>
<dbReference type="KEGG" id="cac:CA_C3177"/>
<dbReference type="PATRIC" id="fig|272562.8.peg.3357"/>
<dbReference type="eggNOG" id="COG0215">
    <property type="taxonomic scope" value="Bacteria"/>
</dbReference>
<dbReference type="HOGENOM" id="CLU_013528_0_1_9"/>
<dbReference type="OrthoDB" id="9815130at2"/>
<dbReference type="Proteomes" id="UP000000814">
    <property type="component" value="Chromosome"/>
</dbReference>
<dbReference type="GO" id="GO:0005829">
    <property type="term" value="C:cytosol"/>
    <property type="evidence" value="ECO:0007669"/>
    <property type="project" value="TreeGrafter"/>
</dbReference>
<dbReference type="GO" id="GO:0005524">
    <property type="term" value="F:ATP binding"/>
    <property type="evidence" value="ECO:0007669"/>
    <property type="project" value="UniProtKB-UniRule"/>
</dbReference>
<dbReference type="GO" id="GO:0004817">
    <property type="term" value="F:cysteine-tRNA ligase activity"/>
    <property type="evidence" value="ECO:0007669"/>
    <property type="project" value="UniProtKB-UniRule"/>
</dbReference>
<dbReference type="GO" id="GO:0008270">
    <property type="term" value="F:zinc ion binding"/>
    <property type="evidence" value="ECO:0007669"/>
    <property type="project" value="UniProtKB-UniRule"/>
</dbReference>
<dbReference type="GO" id="GO:0006423">
    <property type="term" value="P:cysteinyl-tRNA aminoacylation"/>
    <property type="evidence" value="ECO:0007669"/>
    <property type="project" value="UniProtKB-UniRule"/>
</dbReference>
<dbReference type="CDD" id="cd07963">
    <property type="entry name" value="Anticodon_Ia_Cys"/>
    <property type="match status" value="1"/>
</dbReference>
<dbReference type="CDD" id="cd00672">
    <property type="entry name" value="CysRS_core"/>
    <property type="match status" value="1"/>
</dbReference>
<dbReference type="FunFam" id="3.40.50.620:FF:000009">
    <property type="entry name" value="Cysteine--tRNA ligase"/>
    <property type="match status" value="1"/>
</dbReference>
<dbReference type="Gene3D" id="1.20.120.1910">
    <property type="entry name" value="Cysteine-tRNA ligase, C-terminal anti-codon recognition domain"/>
    <property type="match status" value="1"/>
</dbReference>
<dbReference type="Gene3D" id="3.40.50.620">
    <property type="entry name" value="HUPs"/>
    <property type="match status" value="1"/>
</dbReference>
<dbReference type="HAMAP" id="MF_00041">
    <property type="entry name" value="Cys_tRNA_synth"/>
    <property type="match status" value="1"/>
</dbReference>
<dbReference type="InterPro" id="IPR015803">
    <property type="entry name" value="Cys-tRNA-ligase"/>
</dbReference>
<dbReference type="InterPro" id="IPR015273">
    <property type="entry name" value="Cys-tRNA-synt_Ia_DALR"/>
</dbReference>
<dbReference type="InterPro" id="IPR024909">
    <property type="entry name" value="Cys-tRNA/MSH_ligase"/>
</dbReference>
<dbReference type="InterPro" id="IPR056411">
    <property type="entry name" value="CysS_C"/>
</dbReference>
<dbReference type="InterPro" id="IPR014729">
    <property type="entry name" value="Rossmann-like_a/b/a_fold"/>
</dbReference>
<dbReference type="InterPro" id="IPR032678">
    <property type="entry name" value="tRNA-synt_1_cat_dom"/>
</dbReference>
<dbReference type="InterPro" id="IPR009080">
    <property type="entry name" value="tRNAsynth_Ia_anticodon-bd"/>
</dbReference>
<dbReference type="NCBIfam" id="TIGR00435">
    <property type="entry name" value="cysS"/>
    <property type="match status" value="1"/>
</dbReference>
<dbReference type="PANTHER" id="PTHR10890:SF3">
    <property type="entry name" value="CYSTEINE--TRNA LIGASE, CYTOPLASMIC"/>
    <property type="match status" value="1"/>
</dbReference>
<dbReference type="PANTHER" id="PTHR10890">
    <property type="entry name" value="CYSTEINYL-TRNA SYNTHETASE"/>
    <property type="match status" value="1"/>
</dbReference>
<dbReference type="Pfam" id="PF23493">
    <property type="entry name" value="CysS_C"/>
    <property type="match status" value="1"/>
</dbReference>
<dbReference type="Pfam" id="PF09190">
    <property type="entry name" value="DALR_2"/>
    <property type="match status" value="1"/>
</dbReference>
<dbReference type="Pfam" id="PF01406">
    <property type="entry name" value="tRNA-synt_1e"/>
    <property type="match status" value="1"/>
</dbReference>
<dbReference type="PRINTS" id="PR00983">
    <property type="entry name" value="TRNASYNTHCYS"/>
</dbReference>
<dbReference type="SMART" id="SM00840">
    <property type="entry name" value="DALR_2"/>
    <property type="match status" value="1"/>
</dbReference>
<dbReference type="SUPFAM" id="SSF47323">
    <property type="entry name" value="Anticodon-binding domain of a subclass of class I aminoacyl-tRNA synthetases"/>
    <property type="match status" value="1"/>
</dbReference>
<dbReference type="SUPFAM" id="SSF52374">
    <property type="entry name" value="Nucleotidylyl transferase"/>
    <property type="match status" value="1"/>
</dbReference>
<proteinExistence type="inferred from homology"/>
<evidence type="ECO:0000255" key="1">
    <source>
        <dbReference type="HAMAP-Rule" id="MF_00041"/>
    </source>
</evidence>
<name>SYC_CLOAB</name>
<sequence length="464" mass="53350">MKIYNTMTRKKEEFVPVKPNEVQMYVCGPTVYNFFHIGNARTFIVFDTVRKYFEYRGYKVNFIQNFTDIDDKMIAKANNEGVSVKELGDRYIKEYYEDADGLNLERATCNPRATEYIGKIIDFVKGLQDEGYAYEIDGDVYFNTNAFKEYGKLSGQNLEDRMAGATIAVDDRKKSPADFALWKSEKPGEPSWESPWGKGRPGWHIECSCMARDLLGDTIDIHAGAIDLIFPHHENEIAQSEARTGKPFSKYWMHAAYLNINNEKMSKSLNNFLTARDILKEYDAEVIRLFLLSAHYRTPLNFTEESIEAAKTSLERLYNTINNLGSLLNNTAESNDDSEYLKALDSYREKFIEKMDDDFNTADGISVIFDLAKDINININGKSSKAAVEKAISLMRELGKPLGILQKVEKHNLEDEIQNLIEQRQNARKNKDWALADKIRDDLKERGIVLEDTPEGIRWKFIDK</sequence>
<keyword id="KW-0030">Aminoacyl-tRNA synthetase</keyword>
<keyword id="KW-0067">ATP-binding</keyword>
<keyword id="KW-0963">Cytoplasm</keyword>
<keyword id="KW-0436">Ligase</keyword>
<keyword id="KW-0479">Metal-binding</keyword>
<keyword id="KW-0547">Nucleotide-binding</keyword>
<keyword id="KW-0648">Protein biosynthesis</keyword>
<keyword id="KW-1185">Reference proteome</keyword>
<keyword id="KW-0862">Zinc</keyword>
<gene>
    <name evidence="1" type="primary">cysS</name>
    <name type="ordered locus">CA_C3177</name>
</gene>
<protein>
    <recommendedName>
        <fullName evidence="1">Cysteine--tRNA ligase</fullName>
        <ecNumber evidence="1">6.1.1.16</ecNumber>
    </recommendedName>
    <alternativeName>
        <fullName evidence="1">Cysteinyl-tRNA synthetase</fullName>
        <shortName evidence="1">CysRS</shortName>
    </alternativeName>
</protein>
<organism>
    <name type="scientific">Clostridium acetobutylicum (strain ATCC 824 / DSM 792 / JCM 1419 / IAM 19013 / LMG 5710 / NBRC 13948 / NRRL B-527 / VKM B-1787 / 2291 / W)</name>
    <dbReference type="NCBI Taxonomy" id="272562"/>
    <lineage>
        <taxon>Bacteria</taxon>
        <taxon>Bacillati</taxon>
        <taxon>Bacillota</taxon>
        <taxon>Clostridia</taxon>
        <taxon>Eubacteriales</taxon>
        <taxon>Clostridiaceae</taxon>
        <taxon>Clostridium</taxon>
    </lineage>
</organism>
<comment type="catalytic activity">
    <reaction evidence="1">
        <text>tRNA(Cys) + L-cysteine + ATP = L-cysteinyl-tRNA(Cys) + AMP + diphosphate</text>
        <dbReference type="Rhea" id="RHEA:17773"/>
        <dbReference type="Rhea" id="RHEA-COMP:9661"/>
        <dbReference type="Rhea" id="RHEA-COMP:9679"/>
        <dbReference type="ChEBI" id="CHEBI:30616"/>
        <dbReference type="ChEBI" id="CHEBI:33019"/>
        <dbReference type="ChEBI" id="CHEBI:35235"/>
        <dbReference type="ChEBI" id="CHEBI:78442"/>
        <dbReference type="ChEBI" id="CHEBI:78517"/>
        <dbReference type="ChEBI" id="CHEBI:456215"/>
        <dbReference type="EC" id="6.1.1.16"/>
    </reaction>
</comment>
<comment type="cofactor">
    <cofactor evidence="1">
        <name>Zn(2+)</name>
        <dbReference type="ChEBI" id="CHEBI:29105"/>
    </cofactor>
    <text evidence="1">Binds 1 zinc ion per subunit.</text>
</comment>
<comment type="subunit">
    <text evidence="1">Monomer.</text>
</comment>
<comment type="subcellular location">
    <subcellularLocation>
        <location evidence="1">Cytoplasm</location>
    </subcellularLocation>
</comment>
<comment type="similarity">
    <text evidence="1">Belongs to the class-I aminoacyl-tRNA synthetase family.</text>
</comment>
<feature type="chain" id="PRO_0000159381" description="Cysteine--tRNA ligase">
    <location>
        <begin position="1"/>
        <end position="464"/>
    </location>
</feature>
<feature type="short sequence motif" description="'HIGH' region">
    <location>
        <begin position="29"/>
        <end position="39"/>
    </location>
</feature>
<feature type="short sequence motif" description="'KMSKS' region">
    <location>
        <begin position="264"/>
        <end position="268"/>
    </location>
</feature>
<feature type="binding site" evidence="1">
    <location>
        <position position="27"/>
    </location>
    <ligand>
        <name>Zn(2+)</name>
        <dbReference type="ChEBI" id="CHEBI:29105"/>
    </ligand>
</feature>
<feature type="binding site" evidence="1">
    <location>
        <position position="207"/>
    </location>
    <ligand>
        <name>Zn(2+)</name>
        <dbReference type="ChEBI" id="CHEBI:29105"/>
    </ligand>
</feature>
<feature type="binding site" evidence="1">
    <location>
        <position position="232"/>
    </location>
    <ligand>
        <name>Zn(2+)</name>
        <dbReference type="ChEBI" id="CHEBI:29105"/>
    </ligand>
</feature>
<feature type="binding site" evidence="1">
    <location>
        <position position="236"/>
    </location>
    <ligand>
        <name>Zn(2+)</name>
        <dbReference type="ChEBI" id="CHEBI:29105"/>
    </ligand>
</feature>
<feature type="binding site" evidence="1">
    <location>
        <position position="267"/>
    </location>
    <ligand>
        <name>ATP</name>
        <dbReference type="ChEBI" id="CHEBI:30616"/>
    </ligand>
</feature>